<protein>
    <recommendedName>
        <fullName evidence="1">Beta-galactosidase</fullName>
        <shortName evidence="1">Beta-gal</shortName>
        <ecNumber evidence="1">3.2.1.23</ecNumber>
    </recommendedName>
    <alternativeName>
        <fullName evidence="1">Lactase</fullName>
    </alternativeName>
</protein>
<name>BGAL_ECOHS</name>
<sequence>MTMITDSLAVVLQRRDWENPGVTQLNRLAAHPPFASWRNSEEARTDRPSQQLRSLNGEWRFAWFPAPEAVPESWLECDLPEADTVVVPSNWQMHGYDAPIYTNVTYPITVNPPFVPTENPTGCYSLTFNVDESWLQEGQTRIIFDGVNSAFHLWCNGRWVGYGQDSRLPSEFDLSAFLRAGENRLAVMVLRWSDGSYLEDQDMWRMSGIFRDVSLLHKPTTQISDFHVATRFNDDFSRAVLEAEVQMCGELRDYLRVTVSLWQGETQVASGTAPFGGEIIDERGSYADRVTLRLNVENPKLWSAEIPNLYRAVVELHTADGTLIEAEACDVGFREVRIENGLLLLNGKPLLIRGVNRHEHHPLHGQVMDEQTMVQDILLMKQNNFNAVRCSHYPNHPLWYTLCDRYGLYVVDEANIETHGMVPMNRLTDDPRWLPAMSERVTRMVQRDRNHPSVIIWSLGNESGHGANHDALYRWIKSVDPSRPVQYEGGGADTTATDIICPMYARVDEDQPFPAVPKWSIKKWLSLPGETRPLILCEYAHAMGNSLGGFAKYWQAFRQYPRLQGGFVWDWVDQSLIKYDENGNPWSAYGGDFGDTPNDRQFCMNGLVFADRTPHPALTEAKHQQQFFQFRLSGQTIEVTSEYLFRHSDNELLHWMVALDGKPLASGEVPLDVAPQGKQLIELPELPQPESAGQLWLTVRVVQPNATAWSEAGHISAWQQWRLAENLSVTLPSASHIIPQLTTSETDFCIELGNKRWQFNRQSGLLSQMWIGDEKQLLTPLRDQFTRAPLDNDIGVSEATRIDPNAWVERWKAAGHYQAEAALLQCTADTLADAVLITTAHAWQHQGKTLFISRKTYRIDGSGQMAITVDVEVASDTPHPARIGLTCQLAQVAERVNWLGLGPQENYPDRLTAACFDRWDVPLSDMYTPYVFPSENGLRCGTRELNYGSHQWRGDFQFNISRYSQQQLMETSHRHLLHAEEGTWLNIDGFHMGIGGDDSWSPSVSAEFQLSAGRYHYQLVWCQK</sequence>
<comment type="catalytic activity">
    <reaction evidence="1">
        <text>Hydrolysis of terminal non-reducing beta-D-galactose residues in beta-D-galactosides.</text>
        <dbReference type="EC" id="3.2.1.23"/>
    </reaction>
</comment>
<comment type="cofactor">
    <cofactor evidence="1">
        <name>Mg(2+)</name>
        <dbReference type="ChEBI" id="CHEBI:18420"/>
    </cofactor>
    <text evidence="1">Binds 2 magnesium ions per monomer.</text>
</comment>
<comment type="cofactor">
    <cofactor evidence="1">
        <name>Na(+)</name>
        <dbReference type="ChEBI" id="CHEBI:29101"/>
    </cofactor>
    <text evidence="1">Binds 1 sodium ion per monomer.</text>
</comment>
<comment type="subunit">
    <text evidence="1">Homotetramer.</text>
</comment>
<comment type="similarity">
    <text evidence="1">Belongs to the glycosyl hydrolase 2 family.</text>
</comment>
<organism>
    <name type="scientific">Escherichia coli O9:H4 (strain HS)</name>
    <dbReference type="NCBI Taxonomy" id="331112"/>
    <lineage>
        <taxon>Bacteria</taxon>
        <taxon>Pseudomonadati</taxon>
        <taxon>Pseudomonadota</taxon>
        <taxon>Gammaproteobacteria</taxon>
        <taxon>Enterobacterales</taxon>
        <taxon>Enterobacteriaceae</taxon>
        <taxon>Escherichia</taxon>
    </lineage>
</organism>
<proteinExistence type="inferred from homology"/>
<gene>
    <name evidence="1" type="primary">lacZ</name>
    <name type="ordered locus">EcHS_A0408</name>
</gene>
<evidence type="ECO:0000255" key="1">
    <source>
        <dbReference type="HAMAP-Rule" id="MF_01687"/>
    </source>
</evidence>
<reference key="1">
    <citation type="journal article" date="2008" name="J. Bacteriol.">
        <title>The pangenome structure of Escherichia coli: comparative genomic analysis of E. coli commensal and pathogenic isolates.</title>
        <authorList>
            <person name="Rasko D.A."/>
            <person name="Rosovitz M.J."/>
            <person name="Myers G.S.A."/>
            <person name="Mongodin E.F."/>
            <person name="Fricke W.F."/>
            <person name="Gajer P."/>
            <person name="Crabtree J."/>
            <person name="Sebaihia M."/>
            <person name="Thomson N.R."/>
            <person name="Chaudhuri R."/>
            <person name="Henderson I.R."/>
            <person name="Sperandio V."/>
            <person name="Ravel J."/>
        </authorList>
    </citation>
    <scope>NUCLEOTIDE SEQUENCE [LARGE SCALE GENOMIC DNA]</scope>
    <source>
        <strain>HS</strain>
    </source>
</reference>
<dbReference type="EC" id="3.2.1.23" evidence="1"/>
<dbReference type="EMBL" id="CP000802">
    <property type="protein sequence ID" value="ABV04795.1"/>
    <property type="molecule type" value="Genomic_DNA"/>
</dbReference>
<dbReference type="RefSeq" id="WP_000177922.1">
    <property type="nucleotide sequence ID" value="NC_009800.1"/>
</dbReference>
<dbReference type="SMR" id="A7ZWZ1"/>
<dbReference type="CAZy" id="GH2">
    <property type="family name" value="Glycoside Hydrolase Family 2"/>
</dbReference>
<dbReference type="KEGG" id="ecx:EcHS_A0408"/>
<dbReference type="HOGENOM" id="CLU_002346_0_2_6"/>
<dbReference type="GO" id="GO:0009341">
    <property type="term" value="C:beta-galactosidase complex"/>
    <property type="evidence" value="ECO:0007669"/>
    <property type="project" value="InterPro"/>
</dbReference>
<dbReference type="GO" id="GO:0004565">
    <property type="term" value="F:beta-galactosidase activity"/>
    <property type="evidence" value="ECO:0007669"/>
    <property type="project" value="UniProtKB-EC"/>
</dbReference>
<dbReference type="GO" id="GO:0030246">
    <property type="term" value="F:carbohydrate binding"/>
    <property type="evidence" value="ECO:0007669"/>
    <property type="project" value="InterPro"/>
</dbReference>
<dbReference type="GO" id="GO:0000287">
    <property type="term" value="F:magnesium ion binding"/>
    <property type="evidence" value="ECO:0007669"/>
    <property type="project" value="UniProtKB-UniRule"/>
</dbReference>
<dbReference type="GO" id="GO:0005990">
    <property type="term" value="P:lactose catabolic process"/>
    <property type="evidence" value="ECO:0007669"/>
    <property type="project" value="TreeGrafter"/>
</dbReference>
<dbReference type="FunFam" id="2.60.120.260:FF:000058">
    <property type="entry name" value="Beta-galactosidase"/>
    <property type="match status" value="1"/>
</dbReference>
<dbReference type="FunFam" id="2.60.40.10:FF:000680">
    <property type="entry name" value="Beta-galactosidase"/>
    <property type="match status" value="1"/>
</dbReference>
<dbReference type="FunFam" id="2.60.40.10:FF:000850">
    <property type="entry name" value="Beta-galactosidase"/>
    <property type="match status" value="1"/>
</dbReference>
<dbReference type="FunFam" id="2.70.98.10:FF:000006">
    <property type="entry name" value="Beta-galactosidase"/>
    <property type="match status" value="1"/>
</dbReference>
<dbReference type="FunFam" id="3.20.20.80:FF:000018">
    <property type="entry name" value="Beta-galactosidase"/>
    <property type="match status" value="1"/>
</dbReference>
<dbReference type="Gene3D" id="2.70.98.10">
    <property type="match status" value="1"/>
</dbReference>
<dbReference type="Gene3D" id="2.60.120.260">
    <property type="entry name" value="Galactose-binding domain-like"/>
    <property type="match status" value="1"/>
</dbReference>
<dbReference type="Gene3D" id="3.20.20.80">
    <property type="entry name" value="Glycosidases"/>
    <property type="match status" value="1"/>
</dbReference>
<dbReference type="Gene3D" id="2.60.40.10">
    <property type="entry name" value="Immunoglobulins"/>
    <property type="match status" value="2"/>
</dbReference>
<dbReference type="HAMAP" id="MF_01687">
    <property type="entry name" value="Beta_gal"/>
    <property type="match status" value="1"/>
</dbReference>
<dbReference type="InterPro" id="IPR004199">
    <property type="entry name" value="B-gal_small/dom_5"/>
</dbReference>
<dbReference type="InterPro" id="IPR050347">
    <property type="entry name" value="Bact_Beta-galactosidase"/>
</dbReference>
<dbReference type="InterPro" id="IPR036156">
    <property type="entry name" value="Beta-gal/glucu_dom_sf"/>
</dbReference>
<dbReference type="InterPro" id="IPR011013">
    <property type="entry name" value="Gal_mutarotase_sf_dom"/>
</dbReference>
<dbReference type="InterPro" id="IPR008979">
    <property type="entry name" value="Galactose-bd-like_sf"/>
</dbReference>
<dbReference type="InterPro" id="IPR014718">
    <property type="entry name" value="GH-type_carb-bd"/>
</dbReference>
<dbReference type="InterPro" id="IPR006101">
    <property type="entry name" value="Glyco_hydro_2"/>
</dbReference>
<dbReference type="InterPro" id="IPR023232">
    <property type="entry name" value="Glyco_hydro_2_AS"/>
</dbReference>
<dbReference type="InterPro" id="IPR023933">
    <property type="entry name" value="Glyco_hydro_2_beta_Galsidase"/>
</dbReference>
<dbReference type="InterPro" id="IPR006103">
    <property type="entry name" value="Glyco_hydro_2_cat"/>
</dbReference>
<dbReference type="InterPro" id="IPR023230">
    <property type="entry name" value="Glyco_hydro_2_CS"/>
</dbReference>
<dbReference type="InterPro" id="IPR006102">
    <property type="entry name" value="Glyco_hydro_2_Ig-like"/>
</dbReference>
<dbReference type="InterPro" id="IPR006104">
    <property type="entry name" value="Glyco_hydro_2_N"/>
</dbReference>
<dbReference type="InterPro" id="IPR017853">
    <property type="entry name" value="Glycoside_hydrolase_SF"/>
</dbReference>
<dbReference type="InterPro" id="IPR013783">
    <property type="entry name" value="Ig-like_fold"/>
</dbReference>
<dbReference type="InterPro" id="IPR032312">
    <property type="entry name" value="LacZ_4"/>
</dbReference>
<dbReference type="NCBIfam" id="NF007074">
    <property type="entry name" value="PRK09525.1"/>
    <property type="match status" value="1"/>
</dbReference>
<dbReference type="PANTHER" id="PTHR46323">
    <property type="entry name" value="BETA-GALACTOSIDASE"/>
    <property type="match status" value="1"/>
</dbReference>
<dbReference type="PANTHER" id="PTHR46323:SF2">
    <property type="entry name" value="BETA-GALACTOSIDASE"/>
    <property type="match status" value="1"/>
</dbReference>
<dbReference type="Pfam" id="PF02929">
    <property type="entry name" value="Bgal_small_N"/>
    <property type="match status" value="1"/>
</dbReference>
<dbReference type="Pfam" id="PF00703">
    <property type="entry name" value="Glyco_hydro_2"/>
    <property type="match status" value="1"/>
</dbReference>
<dbReference type="Pfam" id="PF02836">
    <property type="entry name" value="Glyco_hydro_2_C"/>
    <property type="match status" value="1"/>
</dbReference>
<dbReference type="Pfam" id="PF02837">
    <property type="entry name" value="Glyco_hydro_2_N"/>
    <property type="match status" value="1"/>
</dbReference>
<dbReference type="Pfam" id="PF16353">
    <property type="entry name" value="LacZ_4"/>
    <property type="match status" value="1"/>
</dbReference>
<dbReference type="PRINTS" id="PR00132">
    <property type="entry name" value="GLHYDRLASE2"/>
</dbReference>
<dbReference type="SMART" id="SM01038">
    <property type="entry name" value="Bgal_small_N"/>
    <property type="match status" value="1"/>
</dbReference>
<dbReference type="SUPFAM" id="SSF51445">
    <property type="entry name" value="(Trans)glycosidases"/>
    <property type="match status" value="1"/>
</dbReference>
<dbReference type="SUPFAM" id="SSF49303">
    <property type="entry name" value="beta-Galactosidase/glucuronidase domain"/>
    <property type="match status" value="2"/>
</dbReference>
<dbReference type="SUPFAM" id="SSF74650">
    <property type="entry name" value="Galactose mutarotase-like"/>
    <property type="match status" value="1"/>
</dbReference>
<dbReference type="SUPFAM" id="SSF49785">
    <property type="entry name" value="Galactose-binding domain-like"/>
    <property type="match status" value="1"/>
</dbReference>
<dbReference type="PROSITE" id="PS00719">
    <property type="entry name" value="GLYCOSYL_HYDROL_F2_1"/>
    <property type="match status" value="1"/>
</dbReference>
<dbReference type="PROSITE" id="PS00608">
    <property type="entry name" value="GLYCOSYL_HYDROL_F2_2"/>
    <property type="match status" value="1"/>
</dbReference>
<keyword id="KW-0326">Glycosidase</keyword>
<keyword id="KW-0378">Hydrolase</keyword>
<keyword id="KW-0460">Magnesium</keyword>
<keyword id="KW-0479">Metal-binding</keyword>
<keyword id="KW-0915">Sodium</keyword>
<feature type="chain" id="PRO_0000366998" description="Beta-galactosidase">
    <location>
        <begin position="1"/>
        <end position="1024"/>
    </location>
</feature>
<feature type="active site" description="Proton donor" evidence="1">
    <location>
        <position position="462"/>
    </location>
</feature>
<feature type="active site" description="Nucleophile" evidence="1">
    <location>
        <position position="538"/>
    </location>
</feature>
<feature type="binding site" evidence="1">
    <location>
        <position position="103"/>
    </location>
    <ligand>
        <name>substrate</name>
    </ligand>
</feature>
<feature type="binding site" evidence="1">
    <location>
        <position position="202"/>
    </location>
    <ligand>
        <name>Na(+)</name>
        <dbReference type="ChEBI" id="CHEBI:29101"/>
    </ligand>
</feature>
<feature type="binding site" evidence="1">
    <location>
        <position position="202"/>
    </location>
    <ligand>
        <name>substrate</name>
    </ligand>
</feature>
<feature type="binding site" evidence="1">
    <location>
        <position position="417"/>
    </location>
    <ligand>
        <name>Mg(2+)</name>
        <dbReference type="ChEBI" id="CHEBI:18420"/>
        <label>1</label>
    </ligand>
</feature>
<feature type="binding site" evidence="1">
    <location>
        <position position="419"/>
    </location>
    <ligand>
        <name>Mg(2+)</name>
        <dbReference type="ChEBI" id="CHEBI:18420"/>
        <label>1</label>
    </ligand>
</feature>
<feature type="binding site" evidence="1">
    <location>
        <position position="462"/>
    </location>
    <ligand>
        <name>Mg(2+)</name>
        <dbReference type="ChEBI" id="CHEBI:18420"/>
        <label>1</label>
    </ligand>
</feature>
<feature type="binding site" evidence="1">
    <location>
        <position position="462"/>
    </location>
    <ligand>
        <name>substrate</name>
    </ligand>
</feature>
<feature type="binding site" evidence="1">
    <location>
        <begin position="538"/>
        <end position="541"/>
    </location>
    <ligand>
        <name>substrate</name>
    </ligand>
</feature>
<feature type="binding site" evidence="1">
    <location>
        <position position="598"/>
    </location>
    <ligand>
        <name>Mg(2+)</name>
        <dbReference type="ChEBI" id="CHEBI:18420"/>
        <label>2</label>
    </ligand>
</feature>
<feature type="binding site" evidence="1">
    <location>
        <position position="602"/>
    </location>
    <ligand>
        <name>Na(+)</name>
        <dbReference type="ChEBI" id="CHEBI:29101"/>
    </ligand>
</feature>
<feature type="binding site" evidence="1">
    <location>
        <position position="605"/>
    </location>
    <ligand>
        <name>Na(+)</name>
        <dbReference type="ChEBI" id="CHEBI:29101"/>
    </ligand>
</feature>
<feature type="binding site" evidence="1">
    <location>
        <position position="605"/>
    </location>
    <ligand>
        <name>substrate</name>
    </ligand>
</feature>
<feature type="binding site" evidence="1">
    <location>
        <position position="1000"/>
    </location>
    <ligand>
        <name>substrate</name>
    </ligand>
</feature>
<feature type="site" description="Transition state stabilizer" evidence="1">
    <location>
        <position position="358"/>
    </location>
</feature>
<feature type="site" description="Transition state stabilizer" evidence="1">
    <location>
        <position position="392"/>
    </location>
</feature>
<accession>A7ZWZ1</accession>